<reference key="1">
    <citation type="journal article" date="2002" name="Proc. Natl. Acad. Sci. U.S.A.">
        <title>Genome sequence of the hyperthermophilic crenarchaeon Pyrobaculum aerophilum.</title>
        <authorList>
            <person name="Fitz-Gibbon S.T."/>
            <person name="Ladner H."/>
            <person name="Kim U.-J."/>
            <person name="Stetter K.O."/>
            <person name="Simon M.I."/>
            <person name="Miller J.H."/>
        </authorList>
    </citation>
    <scope>NUCLEOTIDE SEQUENCE [LARGE SCALE GENOMIC DNA]</scope>
    <source>
        <strain>ATCC 51768 / DSM 7523 / JCM 9630 / CIP 104966 / NBRC 100827 / IM2</strain>
    </source>
</reference>
<keyword id="KW-0030">Aminoacyl-tRNA synthetase</keyword>
<keyword id="KW-0067">ATP-binding</keyword>
<keyword id="KW-0963">Cytoplasm</keyword>
<keyword id="KW-0436">Ligase</keyword>
<keyword id="KW-0547">Nucleotide-binding</keyword>
<keyword id="KW-0648">Protein biosynthesis</keyword>
<keyword id="KW-1185">Reference proteome</keyword>
<evidence type="ECO:0000255" key="1">
    <source>
        <dbReference type="HAMAP-Rule" id="MF_02009"/>
    </source>
</evidence>
<accession>Q8ZYT7</accession>
<proteinExistence type="inferred from homology"/>
<protein>
    <recommendedName>
        <fullName evidence="1">Tyrosine--tRNA ligase 1</fullName>
        <ecNumber evidence="1">6.1.1.1</ecNumber>
    </recommendedName>
    <alternativeName>
        <fullName evidence="1">Tyrosyl-tRNA synthetase 1</fullName>
        <shortName evidence="1">TyrRS 1</shortName>
    </alternativeName>
</protein>
<comment type="function">
    <text evidence="1">Catalyzes the attachment of tyrosine to tRNA(Tyr) in a two-step reaction: tyrosine is first activated by ATP to form Tyr-AMP and then transferred to the acceptor end of tRNA(Tyr).</text>
</comment>
<comment type="catalytic activity">
    <reaction evidence="1">
        <text>tRNA(Tyr) + L-tyrosine + ATP = L-tyrosyl-tRNA(Tyr) + AMP + diphosphate + H(+)</text>
        <dbReference type="Rhea" id="RHEA:10220"/>
        <dbReference type="Rhea" id="RHEA-COMP:9706"/>
        <dbReference type="Rhea" id="RHEA-COMP:9707"/>
        <dbReference type="ChEBI" id="CHEBI:15378"/>
        <dbReference type="ChEBI" id="CHEBI:30616"/>
        <dbReference type="ChEBI" id="CHEBI:33019"/>
        <dbReference type="ChEBI" id="CHEBI:58315"/>
        <dbReference type="ChEBI" id="CHEBI:78442"/>
        <dbReference type="ChEBI" id="CHEBI:78536"/>
        <dbReference type="ChEBI" id="CHEBI:456215"/>
        <dbReference type="EC" id="6.1.1.1"/>
    </reaction>
</comment>
<comment type="subunit">
    <text evidence="1">Homodimer.</text>
</comment>
<comment type="subcellular location">
    <subcellularLocation>
        <location evidence="1">Cytoplasm</location>
    </subcellularLocation>
</comment>
<comment type="similarity">
    <text evidence="1">Belongs to the class-I aminoacyl-tRNA synthetase family. TyrS type 4 subfamily.</text>
</comment>
<dbReference type="EC" id="6.1.1.1" evidence="1"/>
<dbReference type="EMBL" id="AE009441">
    <property type="protein sequence ID" value="AAL62906.1"/>
    <property type="molecule type" value="Genomic_DNA"/>
</dbReference>
<dbReference type="RefSeq" id="WP_011007378.1">
    <property type="nucleotide sequence ID" value="NC_003364.1"/>
</dbReference>
<dbReference type="SMR" id="Q8ZYT7"/>
<dbReference type="STRING" id="178306.PAE0630"/>
<dbReference type="EnsemblBacteria" id="AAL62906">
    <property type="protein sequence ID" value="AAL62906"/>
    <property type="gene ID" value="PAE0630"/>
</dbReference>
<dbReference type="GeneID" id="1465131"/>
<dbReference type="KEGG" id="pai:PAE0630"/>
<dbReference type="PATRIC" id="fig|178306.9.peg.450"/>
<dbReference type="eggNOG" id="arCOG01886">
    <property type="taxonomic scope" value="Archaea"/>
</dbReference>
<dbReference type="HOGENOM" id="CLU_035267_1_1_2"/>
<dbReference type="InParanoid" id="Q8ZYT7"/>
<dbReference type="Proteomes" id="UP000002439">
    <property type="component" value="Chromosome"/>
</dbReference>
<dbReference type="GO" id="GO:0005737">
    <property type="term" value="C:cytoplasm"/>
    <property type="evidence" value="ECO:0000318"/>
    <property type="project" value="GO_Central"/>
</dbReference>
<dbReference type="GO" id="GO:0005524">
    <property type="term" value="F:ATP binding"/>
    <property type="evidence" value="ECO:0007669"/>
    <property type="project" value="UniProtKB-UniRule"/>
</dbReference>
<dbReference type="GO" id="GO:0004831">
    <property type="term" value="F:tyrosine-tRNA ligase activity"/>
    <property type="evidence" value="ECO:0000318"/>
    <property type="project" value="GO_Central"/>
</dbReference>
<dbReference type="GO" id="GO:0006437">
    <property type="term" value="P:tyrosyl-tRNA aminoacylation"/>
    <property type="evidence" value="ECO:0000318"/>
    <property type="project" value="GO_Central"/>
</dbReference>
<dbReference type="Gene3D" id="3.40.50.620">
    <property type="entry name" value="HUPs"/>
    <property type="match status" value="2"/>
</dbReference>
<dbReference type="HAMAP" id="MF_02009">
    <property type="entry name" value="Tyr_tRNA_synth_type4"/>
    <property type="match status" value="1"/>
</dbReference>
<dbReference type="InterPro" id="IPR002305">
    <property type="entry name" value="aa-tRNA-synth_Ic"/>
</dbReference>
<dbReference type="InterPro" id="IPR014729">
    <property type="entry name" value="Rossmann-like_a/b/a_fold"/>
</dbReference>
<dbReference type="InterPro" id="IPR023678">
    <property type="entry name" value="Tyr-tRNA-ligase_4"/>
</dbReference>
<dbReference type="InterPro" id="IPR023617">
    <property type="entry name" value="Tyr-tRNA-ligase_arc/euk-type"/>
</dbReference>
<dbReference type="InterPro" id="IPR050489">
    <property type="entry name" value="Tyr-tRNA_synthase"/>
</dbReference>
<dbReference type="NCBIfam" id="NF006330">
    <property type="entry name" value="PRK08560.1"/>
    <property type="match status" value="1"/>
</dbReference>
<dbReference type="PANTHER" id="PTHR46264:SF4">
    <property type="entry name" value="TYROSINE--TRNA LIGASE, CYTOPLASMIC"/>
    <property type="match status" value="1"/>
</dbReference>
<dbReference type="PANTHER" id="PTHR46264">
    <property type="entry name" value="TYROSINE-TRNA LIGASE"/>
    <property type="match status" value="1"/>
</dbReference>
<dbReference type="Pfam" id="PF00579">
    <property type="entry name" value="tRNA-synt_1b"/>
    <property type="match status" value="1"/>
</dbReference>
<dbReference type="PIRSF" id="PIRSF006588">
    <property type="entry name" value="TyrRS_arch_euk"/>
    <property type="match status" value="1"/>
</dbReference>
<dbReference type="SUPFAM" id="SSF52374">
    <property type="entry name" value="Nucleotidylyl transferase"/>
    <property type="match status" value="1"/>
</dbReference>
<sequence>MDVESKISLILRYPTEEVITVEELRELLQLGHQLNHYIGFEISGFIHIGTGIVSMSKVVDLQRAGVRTQILLADIHSWLNNKLGGDLDTIRKVAVTYYIEAFKKVIETLGGDPDATRFVLGSDLYHHNDEYWLLLMDITRHLTLSQVRHSLTILGRKMGESIPLAYLVYPPLQVADVFALGAHIPHGGVDQRRAHILARQVADKIRFYPLEVGGKRVKPVALHHKLLPALNISTKPSNKEELSEMKMSKSVPQSAIFIHDSPEEIRQKISKAYCPPRETEYNPVLELLHISAFREERKTPFIIKRPPQYGGDIEVWTYEEVERLYREGKIHPADLKNATAEALINILEPIYKYFQGPGAKLLQEMKNITITR</sequence>
<feature type="chain" id="PRO_0000240266" description="Tyrosine--tRNA ligase 1">
    <location>
        <begin position="1"/>
        <end position="372"/>
    </location>
</feature>
<feature type="short sequence motif" description="'KMSKS' region">
    <location>
        <begin position="246"/>
        <end position="250"/>
    </location>
</feature>
<feature type="binding site" evidence="1">
    <location>
        <position position="37"/>
    </location>
    <ligand>
        <name>L-tyrosine</name>
        <dbReference type="ChEBI" id="CHEBI:58315"/>
    </ligand>
</feature>
<feature type="binding site" evidence="1">
    <location>
        <position position="169"/>
    </location>
    <ligand>
        <name>L-tyrosine</name>
        <dbReference type="ChEBI" id="CHEBI:58315"/>
    </ligand>
</feature>
<feature type="binding site" evidence="1">
    <location>
        <position position="173"/>
    </location>
    <ligand>
        <name>L-tyrosine</name>
        <dbReference type="ChEBI" id="CHEBI:58315"/>
    </ligand>
</feature>
<feature type="binding site" evidence="1">
    <location>
        <position position="176"/>
    </location>
    <ligand>
        <name>L-tyrosine</name>
        <dbReference type="ChEBI" id="CHEBI:58315"/>
    </ligand>
</feature>
<feature type="binding site" evidence="1">
    <location>
        <position position="191"/>
    </location>
    <ligand>
        <name>L-tyrosine</name>
        <dbReference type="ChEBI" id="CHEBI:58315"/>
    </ligand>
</feature>
<feature type="binding site" evidence="1">
    <location>
        <position position="249"/>
    </location>
    <ligand>
        <name>ATP</name>
        <dbReference type="ChEBI" id="CHEBI:30616"/>
    </ligand>
</feature>
<name>SYY1_PYRAE</name>
<organism>
    <name type="scientific">Pyrobaculum aerophilum (strain ATCC 51768 / DSM 7523 / JCM 9630 / CIP 104966 / NBRC 100827 / IM2)</name>
    <dbReference type="NCBI Taxonomy" id="178306"/>
    <lineage>
        <taxon>Archaea</taxon>
        <taxon>Thermoproteota</taxon>
        <taxon>Thermoprotei</taxon>
        <taxon>Thermoproteales</taxon>
        <taxon>Thermoproteaceae</taxon>
        <taxon>Pyrobaculum</taxon>
    </lineage>
</organism>
<gene>
    <name evidence="1" type="primary">tyrS1</name>
    <name type="ordered locus">PAE0630</name>
</gene>